<reference key="1">
    <citation type="journal article" date="2005" name="Nature">
        <title>The genome of the social amoeba Dictyostelium discoideum.</title>
        <authorList>
            <person name="Eichinger L."/>
            <person name="Pachebat J.A."/>
            <person name="Gloeckner G."/>
            <person name="Rajandream M.A."/>
            <person name="Sucgang R."/>
            <person name="Berriman M."/>
            <person name="Song J."/>
            <person name="Olsen R."/>
            <person name="Szafranski K."/>
            <person name="Xu Q."/>
            <person name="Tunggal B."/>
            <person name="Kummerfeld S."/>
            <person name="Madera M."/>
            <person name="Konfortov B.A."/>
            <person name="Rivero F."/>
            <person name="Bankier A.T."/>
            <person name="Lehmann R."/>
            <person name="Hamlin N."/>
            <person name="Davies R."/>
            <person name="Gaudet P."/>
            <person name="Fey P."/>
            <person name="Pilcher K."/>
            <person name="Chen G."/>
            <person name="Saunders D."/>
            <person name="Sodergren E.J."/>
            <person name="Davis P."/>
            <person name="Kerhornou A."/>
            <person name="Nie X."/>
            <person name="Hall N."/>
            <person name="Anjard C."/>
            <person name="Hemphill L."/>
            <person name="Bason N."/>
            <person name="Farbrother P."/>
            <person name="Desany B."/>
            <person name="Just E."/>
            <person name="Morio T."/>
            <person name="Rost R."/>
            <person name="Churcher C.M."/>
            <person name="Cooper J."/>
            <person name="Haydock S."/>
            <person name="van Driessche N."/>
            <person name="Cronin A."/>
            <person name="Goodhead I."/>
            <person name="Muzny D.M."/>
            <person name="Mourier T."/>
            <person name="Pain A."/>
            <person name="Lu M."/>
            <person name="Harper D."/>
            <person name="Lindsay R."/>
            <person name="Hauser H."/>
            <person name="James K.D."/>
            <person name="Quiles M."/>
            <person name="Madan Babu M."/>
            <person name="Saito T."/>
            <person name="Buchrieser C."/>
            <person name="Wardroper A."/>
            <person name="Felder M."/>
            <person name="Thangavelu M."/>
            <person name="Johnson D."/>
            <person name="Knights A."/>
            <person name="Loulseged H."/>
            <person name="Mungall K.L."/>
            <person name="Oliver K."/>
            <person name="Price C."/>
            <person name="Quail M.A."/>
            <person name="Urushihara H."/>
            <person name="Hernandez J."/>
            <person name="Rabbinowitsch E."/>
            <person name="Steffen D."/>
            <person name="Sanders M."/>
            <person name="Ma J."/>
            <person name="Kohara Y."/>
            <person name="Sharp S."/>
            <person name="Simmonds M.N."/>
            <person name="Spiegler S."/>
            <person name="Tivey A."/>
            <person name="Sugano S."/>
            <person name="White B."/>
            <person name="Walker D."/>
            <person name="Woodward J.R."/>
            <person name="Winckler T."/>
            <person name="Tanaka Y."/>
            <person name="Shaulsky G."/>
            <person name="Schleicher M."/>
            <person name="Weinstock G.M."/>
            <person name="Rosenthal A."/>
            <person name="Cox E.C."/>
            <person name="Chisholm R.L."/>
            <person name="Gibbs R.A."/>
            <person name="Loomis W.F."/>
            <person name="Platzer M."/>
            <person name="Kay R.R."/>
            <person name="Williams J.G."/>
            <person name="Dear P.H."/>
            <person name="Noegel A.A."/>
            <person name="Barrell B.G."/>
            <person name="Kuspa A."/>
        </authorList>
    </citation>
    <scope>NUCLEOTIDE SEQUENCE [LARGE SCALE GENOMIC DNA]</scope>
    <source>
        <strain>AX4</strain>
    </source>
</reference>
<reference key="2">
    <citation type="journal article" date="2007" name="Bioinformatics">
        <title>Polyketide synthase genes and the natural products potential of Dictyostelium discoideum.</title>
        <authorList>
            <person name="Zucko J."/>
            <person name="Skunca N."/>
            <person name="Curk T."/>
            <person name="Zupan B."/>
            <person name="Long P.F."/>
            <person name="Cullum J."/>
            <person name="Kessin R.H."/>
            <person name="Hranueli D."/>
        </authorList>
    </citation>
    <scope>IDENTIFICATION</scope>
</reference>
<reference key="3">
    <citation type="journal article" date="2008" name="Exp. Cell Res.">
        <title>Screening of genes involved in cell migration in Dictyostelium.</title>
        <authorList>
            <person name="Nagasaki A."/>
            <person name="Uyeda T.Q.P."/>
        </authorList>
    </citation>
    <scope>FUNCTION</scope>
</reference>
<gene>
    <name type="primary">pks30</name>
    <name type="ORF">DDB_G0290701</name>
</gene>
<organism>
    <name type="scientific">Dictyostelium discoideum</name>
    <name type="common">Social amoeba</name>
    <dbReference type="NCBI Taxonomy" id="44689"/>
    <lineage>
        <taxon>Eukaryota</taxon>
        <taxon>Amoebozoa</taxon>
        <taxon>Evosea</taxon>
        <taxon>Eumycetozoa</taxon>
        <taxon>Dictyostelia</taxon>
        <taxon>Dictyosteliales</taxon>
        <taxon>Dictyosteliaceae</taxon>
        <taxon>Dictyostelium</taxon>
    </lineage>
</organism>
<accession>Q54FQ2</accession>
<comment type="function">
    <text evidence="1 6">Probable polyketide synthase (By similarity). May be involved in the process of cell migration.</text>
</comment>
<comment type="cofactor">
    <cofactor evidence="1">
        <name>pantetheine 4'-phosphate</name>
        <dbReference type="ChEBI" id="CHEBI:47942"/>
    </cofactor>
    <text evidence="1">Binds 1 phosphopantetheine covalently.</text>
</comment>
<comment type="domain">
    <text evidence="1">Modular protein that is responsible for the completion of one condensation-processing cycle. The beta-ketoacyl synthase region is responsible for the actual condensation reaction while the acyl/malonyl transferase region is responsible for incorporating carboxylic acids units onto an acyl carrier protein (ACP) domain (By similarity).</text>
</comment>
<comment type="miscellaneous">
    <text>Encoded by one of the numerous copies of polyketide synthase genes and clustered as a quartet pks29/pks30/pks31/pks32 in chromosome 5.</text>
</comment>
<dbReference type="EC" id="2.3.1.-"/>
<dbReference type="EMBL" id="AAFI02000167">
    <property type="protein sequence ID" value="EAL62085.1"/>
    <property type="molecule type" value="Genomic_DNA"/>
</dbReference>
<dbReference type="RefSeq" id="XP_635589.1">
    <property type="nucleotide sequence ID" value="XM_630497.1"/>
</dbReference>
<dbReference type="SMR" id="Q54FQ2"/>
<dbReference type="FunCoup" id="Q54FQ2">
    <property type="interactions" value="6"/>
</dbReference>
<dbReference type="STRING" id="44689.Q54FQ2"/>
<dbReference type="PaxDb" id="44689-DDB0235263"/>
<dbReference type="EnsemblProtists" id="EAL62085">
    <property type="protein sequence ID" value="EAL62085"/>
    <property type="gene ID" value="DDB_G0290701"/>
</dbReference>
<dbReference type="GeneID" id="8627786"/>
<dbReference type="KEGG" id="ddi:DDB_G0290701"/>
<dbReference type="dictyBase" id="DDB_G0290701">
    <property type="gene designation" value="pks30"/>
</dbReference>
<dbReference type="VEuPathDB" id="AmoebaDB:DDB_G0290701"/>
<dbReference type="eggNOG" id="KOG1178">
    <property type="taxonomic scope" value="Eukaryota"/>
</dbReference>
<dbReference type="eggNOG" id="KOG1202">
    <property type="taxonomic scope" value="Eukaryota"/>
</dbReference>
<dbReference type="HOGENOM" id="CLU_000022_31_0_1"/>
<dbReference type="InParanoid" id="Q54FQ2"/>
<dbReference type="OMA" id="PDIMSAM"/>
<dbReference type="PhylomeDB" id="Q54FQ2"/>
<dbReference type="PRO" id="PR:Q54FQ2"/>
<dbReference type="Proteomes" id="UP000002195">
    <property type="component" value="Chromosome 5"/>
</dbReference>
<dbReference type="GO" id="GO:0004315">
    <property type="term" value="F:3-oxoacyl-[acyl-carrier-protein] synthase activity"/>
    <property type="evidence" value="ECO:0007669"/>
    <property type="project" value="InterPro"/>
</dbReference>
<dbReference type="GO" id="GO:0016491">
    <property type="term" value="F:oxidoreductase activity"/>
    <property type="evidence" value="ECO:0007669"/>
    <property type="project" value="InterPro"/>
</dbReference>
<dbReference type="GO" id="GO:0048870">
    <property type="term" value="P:cell motility"/>
    <property type="evidence" value="ECO:0000316"/>
    <property type="project" value="dictyBase"/>
</dbReference>
<dbReference type="GO" id="GO:0006633">
    <property type="term" value="P:fatty acid biosynthetic process"/>
    <property type="evidence" value="ECO:0000318"/>
    <property type="project" value="GO_Central"/>
</dbReference>
<dbReference type="CDD" id="cd02440">
    <property type="entry name" value="AdoMet_MTases"/>
    <property type="match status" value="1"/>
</dbReference>
<dbReference type="CDD" id="cd05195">
    <property type="entry name" value="enoyl_red"/>
    <property type="match status" value="1"/>
</dbReference>
<dbReference type="CDD" id="cd08954">
    <property type="entry name" value="KR_1_FAS_SDR_x"/>
    <property type="match status" value="1"/>
</dbReference>
<dbReference type="CDD" id="cd00833">
    <property type="entry name" value="PKS"/>
    <property type="match status" value="1"/>
</dbReference>
<dbReference type="CDD" id="cd05235">
    <property type="entry name" value="SDR_e1"/>
    <property type="match status" value="1"/>
</dbReference>
<dbReference type="FunFam" id="3.10.129.110:FF:000009">
    <property type="entry name" value="Probable polyketide synthase 2"/>
    <property type="match status" value="1"/>
</dbReference>
<dbReference type="FunFam" id="3.40.366.10:FF:000002">
    <property type="entry name" value="Probable polyketide synthase 2"/>
    <property type="match status" value="1"/>
</dbReference>
<dbReference type="FunFam" id="3.40.50.720:FF:000967">
    <property type="entry name" value="Probable polyketide synthase 30"/>
    <property type="match status" value="1"/>
</dbReference>
<dbReference type="FunFam" id="3.40.50.150:FF:001165">
    <property type="entry name" value="Probable polyketide synthase 31"/>
    <property type="match status" value="1"/>
</dbReference>
<dbReference type="FunFam" id="3.40.47.10:FF:000091">
    <property type="entry name" value="Probable polyketide synthase 32"/>
    <property type="match status" value="1"/>
</dbReference>
<dbReference type="FunFam" id="3.40.50.720:FF:001433">
    <property type="entry name" value="Probable polyketide synthase 32"/>
    <property type="match status" value="1"/>
</dbReference>
<dbReference type="FunFam" id="3.40.50.720:FF:000794">
    <property type="entry name" value="Probable polyketide synthase 33"/>
    <property type="match status" value="1"/>
</dbReference>
<dbReference type="Gene3D" id="3.40.47.10">
    <property type="match status" value="1"/>
</dbReference>
<dbReference type="Gene3D" id="1.10.1200.10">
    <property type="entry name" value="ACP-like"/>
    <property type="match status" value="1"/>
</dbReference>
<dbReference type="Gene3D" id="3.40.366.10">
    <property type="entry name" value="Malonyl-Coenzyme A Acyl Carrier Protein, domain 2"/>
    <property type="match status" value="1"/>
</dbReference>
<dbReference type="Gene3D" id="3.90.180.10">
    <property type="entry name" value="Medium-chain alcohol dehydrogenases, catalytic domain"/>
    <property type="match status" value="1"/>
</dbReference>
<dbReference type="Gene3D" id="3.40.50.720">
    <property type="entry name" value="NAD(P)-binding Rossmann-like Domain"/>
    <property type="match status" value="3"/>
</dbReference>
<dbReference type="Gene3D" id="3.10.129.110">
    <property type="entry name" value="Polyketide synthase dehydratase"/>
    <property type="match status" value="1"/>
</dbReference>
<dbReference type="Gene3D" id="3.40.50.150">
    <property type="entry name" value="Vaccinia Virus protein VP39"/>
    <property type="match status" value="1"/>
</dbReference>
<dbReference type="InterPro" id="IPR001227">
    <property type="entry name" value="Ac_transferase_dom_sf"/>
</dbReference>
<dbReference type="InterPro" id="IPR036736">
    <property type="entry name" value="ACP-like_sf"/>
</dbReference>
<dbReference type="InterPro" id="IPR014043">
    <property type="entry name" value="Acyl_transferase_dom"/>
</dbReference>
<dbReference type="InterPro" id="IPR016035">
    <property type="entry name" value="Acyl_Trfase/lysoPLipase"/>
</dbReference>
<dbReference type="InterPro" id="IPR013154">
    <property type="entry name" value="ADH-like_N"/>
</dbReference>
<dbReference type="InterPro" id="IPR013120">
    <property type="entry name" value="Far_NAD-bd"/>
</dbReference>
<dbReference type="InterPro" id="IPR011032">
    <property type="entry name" value="GroES-like_sf"/>
</dbReference>
<dbReference type="InterPro" id="IPR018201">
    <property type="entry name" value="Ketoacyl_synth_AS"/>
</dbReference>
<dbReference type="InterPro" id="IPR014031">
    <property type="entry name" value="Ketoacyl_synth_C"/>
</dbReference>
<dbReference type="InterPro" id="IPR014030">
    <property type="entry name" value="Ketoacyl_synth_N"/>
</dbReference>
<dbReference type="InterPro" id="IPR016036">
    <property type="entry name" value="Malonyl_transacylase_ACP-bd"/>
</dbReference>
<dbReference type="InterPro" id="IPR013217">
    <property type="entry name" value="Methyltransf_12"/>
</dbReference>
<dbReference type="InterPro" id="IPR036291">
    <property type="entry name" value="NAD(P)-bd_dom_sf"/>
</dbReference>
<dbReference type="InterPro" id="IPR032821">
    <property type="entry name" value="PKS_assoc"/>
</dbReference>
<dbReference type="InterPro" id="IPR020841">
    <property type="entry name" value="PKS_Beta-ketoAc_synthase_dom"/>
</dbReference>
<dbReference type="InterPro" id="IPR042104">
    <property type="entry name" value="PKS_dehydratase_sf"/>
</dbReference>
<dbReference type="InterPro" id="IPR020843">
    <property type="entry name" value="PKS_ER"/>
</dbReference>
<dbReference type="InterPro" id="IPR013968">
    <property type="entry name" value="PKS_KR"/>
</dbReference>
<dbReference type="InterPro" id="IPR049900">
    <property type="entry name" value="PKS_mFAS_DH"/>
</dbReference>
<dbReference type="InterPro" id="IPR050444">
    <property type="entry name" value="Polyketide_Synthase"/>
</dbReference>
<dbReference type="InterPro" id="IPR009081">
    <property type="entry name" value="PP-bd_ACP"/>
</dbReference>
<dbReference type="InterPro" id="IPR029063">
    <property type="entry name" value="SAM-dependent_MTases_sf"/>
</dbReference>
<dbReference type="InterPro" id="IPR010080">
    <property type="entry name" value="Thioester_reductase-like_dom"/>
</dbReference>
<dbReference type="InterPro" id="IPR016039">
    <property type="entry name" value="Thiolase-like"/>
</dbReference>
<dbReference type="PANTHER" id="PTHR45681:SF5">
    <property type="entry name" value="POLYKETIDE SYNTHASE 27-RELATED"/>
    <property type="match status" value="1"/>
</dbReference>
<dbReference type="PANTHER" id="PTHR45681">
    <property type="entry name" value="POLYKETIDE SYNTHASE 44-RELATED"/>
    <property type="match status" value="1"/>
</dbReference>
<dbReference type="Pfam" id="PF23297">
    <property type="entry name" value="ACP_SdgA_C"/>
    <property type="match status" value="1"/>
</dbReference>
<dbReference type="Pfam" id="PF00698">
    <property type="entry name" value="Acyl_transf_1"/>
    <property type="match status" value="1"/>
</dbReference>
<dbReference type="Pfam" id="PF08240">
    <property type="entry name" value="ADH_N"/>
    <property type="match status" value="1"/>
</dbReference>
<dbReference type="Pfam" id="PF13602">
    <property type="entry name" value="ADH_zinc_N_2"/>
    <property type="match status" value="1"/>
</dbReference>
<dbReference type="Pfam" id="PF16197">
    <property type="entry name" value="KAsynt_C_assoc"/>
    <property type="match status" value="1"/>
</dbReference>
<dbReference type="Pfam" id="PF00109">
    <property type="entry name" value="ketoacyl-synt"/>
    <property type="match status" value="1"/>
</dbReference>
<dbReference type="Pfam" id="PF02801">
    <property type="entry name" value="Ketoacyl-synt_C"/>
    <property type="match status" value="1"/>
</dbReference>
<dbReference type="Pfam" id="PF08659">
    <property type="entry name" value="KR"/>
    <property type="match status" value="1"/>
</dbReference>
<dbReference type="Pfam" id="PF08242">
    <property type="entry name" value="Methyltransf_12"/>
    <property type="match status" value="1"/>
</dbReference>
<dbReference type="Pfam" id="PF07993">
    <property type="entry name" value="NAD_binding_4"/>
    <property type="match status" value="1"/>
</dbReference>
<dbReference type="SMART" id="SM00827">
    <property type="entry name" value="PKS_AT"/>
    <property type="match status" value="1"/>
</dbReference>
<dbReference type="SMART" id="SM00829">
    <property type="entry name" value="PKS_ER"/>
    <property type="match status" value="1"/>
</dbReference>
<dbReference type="SMART" id="SM00822">
    <property type="entry name" value="PKS_KR"/>
    <property type="match status" value="1"/>
</dbReference>
<dbReference type="SMART" id="SM00825">
    <property type="entry name" value="PKS_KS"/>
    <property type="match status" value="1"/>
</dbReference>
<dbReference type="SUPFAM" id="SSF47336">
    <property type="entry name" value="ACP-like"/>
    <property type="match status" value="1"/>
</dbReference>
<dbReference type="SUPFAM" id="SSF52151">
    <property type="entry name" value="FabD/lysophospholipase-like"/>
    <property type="match status" value="1"/>
</dbReference>
<dbReference type="SUPFAM" id="SSF50129">
    <property type="entry name" value="GroES-like"/>
    <property type="match status" value="1"/>
</dbReference>
<dbReference type="SUPFAM" id="SSF51735">
    <property type="entry name" value="NAD(P)-binding Rossmann-fold domains"/>
    <property type="match status" value="3"/>
</dbReference>
<dbReference type="SUPFAM" id="SSF55048">
    <property type="entry name" value="Probable ACP-binding domain of malonyl-CoA ACP transacylase"/>
    <property type="match status" value="1"/>
</dbReference>
<dbReference type="SUPFAM" id="SSF53335">
    <property type="entry name" value="S-adenosyl-L-methionine-dependent methyltransferases"/>
    <property type="match status" value="1"/>
</dbReference>
<dbReference type="SUPFAM" id="SSF53901">
    <property type="entry name" value="Thiolase-like"/>
    <property type="match status" value="1"/>
</dbReference>
<dbReference type="PROSITE" id="PS50075">
    <property type="entry name" value="CARRIER"/>
    <property type="match status" value="1"/>
</dbReference>
<dbReference type="PROSITE" id="PS00606">
    <property type="entry name" value="KS3_1"/>
    <property type="match status" value="1"/>
</dbReference>
<dbReference type="PROSITE" id="PS52004">
    <property type="entry name" value="KS3_2"/>
    <property type="match status" value="1"/>
</dbReference>
<dbReference type="PROSITE" id="PS52019">
    <property type="entry name" value="PKS_MFAS_DH"/>
    <property type="match status" value="1"/>
</dbReference>
<keyword id="KW-0596">Phosphopantetheine</keyword>
<keyword id="KW-0597">Phosphoprotein</keyword>
<keyword id="KW-1185">Reference proteome</keyword>
<keyword id="KW-0808">Transferase</keyword>
<sequence>MVQNTDNNTYNQLIRDINDYDDAGSSGDVAVIGIGLRFPSGSLKESISKPNQLFNELLNGLDGIVTTSERWSDNYFLNGEIASKFAGLLPLDEWKQFDPIFFAINPSNDNVSSIDPQQRFLLKCVWEALEDSGIDPISLRGTNTSTFIGSSTIDYNNLQKSSFETQNNIFGSSTHSVANRIGYCFDFRGENLTIDTACSSSSNAINCGYNSIKSNKSNVSIVGGVNFILDPHISKSFTQLGLLSPTGRCHTFSSDADGYVRSEGVGIVVLKKLKDAIKDSNNIYCVIKGSSSNIDGNFDKLNFYSPSKSSQYENIKLAIKSTNGQINESDIDYCETHGTGTPTGDPIELEGISRVFNKAPATTNNNHKQVLIGSIKSNIGHTEACSGVASLIKCCLMFKNKLFLQNINFKEPNPLINFKEWGLKVVTEPIKFNENKSTVMLINNFGVTGSNVCLILSEFKNNLSRYGNGNGYHKMEIDNNLNEKKKYLIPLSSNSSTSLNNYKSSIIKHSNSNSSPTTTSFKEFVYNQIKFKSTSLIQKSVIIASDWNEFQDESNQIKLNNSDNLISNITVEKKKSPITVMVLCGQGSQYNKMALSLYDNEPIFRESVNRFDKELFKYYGYSVLDKLRSIDDKDLISIHQPILAQPANVIIQVSLYELYKHWGVSADIIIGHSLGEVSSPYCSGMIDFQTLCYLTYHRSVAQNRTTGTGRMLSVNISSDEFINKYQSTTKYKSLEIACYNSPTSIVIAGNEDLLNEITNEFKSNDIFCSMLGSLSSFHTSSQQMIKDEVCSLNISSKQPSIAVFSTVTTNLFNHQTSPFNANYVFDNIIQPVYFTQTITNLYKHIESNDMGNEITFIEVSPHPTLQYYLNQMKSTQSSYFNNGKNITIYSPLNKKKNDYNEFLKTISLLYVNNNFDINFKSQLINDNNNISNTTKLNNLPLYQWDDKEYFKLNSSLEKIKSEGPSINNLGNNTDSPYLSYQTFIDIKKSPFQWLKGHQVSDKFYYPGMGYVHNLLSIYPNQDITISSLEFKSPLVLTEGNNQCLQTIIAPLSKNEFNIKSHYKDQKTNQWILSSLGNFSLTKHNSITSNKLINIQSLKDKCNFTSMSKQDFYETIRIKTNLTYKGLFQGVKQCYIGNNCSLAIVSLNEIYNQKEYNHLINNNNMNTFFNAAILDTCLHGSLVAVTQPVVLDKIEAFKFYSSNIPLLNKNNNNNNSDDDSIKELYVFSDIKPRTNSQTYSVSVKVILPNGTLLVDISNVVCALVSLGSNPDSTIICKPPSNDIYTPYLQLKDSIINKPEQFKHLYSVDEFSVKEEDNQFISNELLLSLFYKHINNRSPSINLESLTTLEYNQFKQLYYNSLANENLFKFIFENLKRYSNILNHDNNHSNIKSKHEELYIRTTKIMAKQLFPLKDDDSITDTPQSLFESGFLDDFYKNSRVVQPLNNLLSEIIVETLKPILNEPIVFRILEAGGGTGSLSLLILEKICKLLNDNSTTSIINIEFTWSDVSASFFAEIKEKFSSFTNHNNLNIIYRVLDLEKPLLDQDLKASYYDFIVMSNVMHVVKKLKPTLNEIHNILTPNGQLLYIEPPYKSFYYDSIFGCFSQWWPSSDSDIELRPDRCCMKQEKWINLLNQCNYRDTIMSGNDNLLFLIQTRKPTINEIISEQSISLDQLNSFNNIILFCNNNNSNDKNRNSCSSSILDLIRSNQELKHKIININNYNEFQSWITNNQNKDDCNKTLIIFLKSIESTMNTFNFKEITFEYIQINQLILKLELSNNFKHLLLSLNSSTDNYLSSSIIGAARYFVEFPQLDLYILNYDNVSIENNQQLSLINYLINPNNNIQKEFTINNNKVYYERYCRRSNNIKSIFQSESFETNKDNLYIQLNSNLEYQLYSKKAELNSNEVEIEVKANGINYKDYLMYIGMIGTDLDIKYGKEYEIENGIGIDNPNIGNDFSGIITRLGSNVKKFKVGDQVCGIGSKTNSSHVIIDFNFIYYKPLNYNHSVSASIPSIYITSLHSIYSIGNLKSNESILIHSAAGGVGISSLDLLKSKQHQGYIFLTVGSKDKEEYLTKKYGSLITAIYSSRNKDYVYEIKNKLIELGVVEQNQQGVDIILNTLSSEYMDSNFQCLNMSGCIVDLSITHLTPNDYMTNNHYKFNMGYNNVEVVDFPSKLIKSYLKKIIKMINSNELELSVPIIEYSNNQFKDAIEYINQRKHIGKIIVNHNQDEFNRVYNNYQSNNNQIIMKHSYDISKLNIGKNILLTGQTGIVLEILKYLVKYSNHSIENIIILSKSKLKWELELLINQSKFKKDNNIKFHFNQIDIEDSNKVNQVLNQLELNENITNIDSIIHFAFMNDIGDVQQVDMNRLNNAHGAKTIGAINLHNQSINRSWNIKQFIMASSIVSIFGSDQQCCYVSACSVIDSLSKYRHSIGLPSLAINLGAISSTGFISRNNAIETMFKSSILKLFSPQLVISSLDLFIQNQHQYPNYCLSDFNFEVLPSTLTNHFLTKFDYQINISKKLSQIKSSSSGNGGDNNEIIRSTILNKICELLSIDESKINEDLQLTQYGMDSLVIVQLKNFIDNQIGHNLITIQQLQNNKINQSIEIIKSAHINNNKNKNNNNNNNLVKKEQQSLDEFIKNEIKLNESIISRPYSIKNILNNNNNKSIFLTGSTGFLGAYLLTELIKMDNISKIYCLIRNNSKLTNPIDVIINNLKKHQLIDMNKESPNQRLTKIINRTGNMSNDKLNSNIENSENNNKQISEDQLIKIIPMIGDVSKDKFGLTEQDYLKLSNECDIIINSAADLNLKSNYEESKTVNVDSINQVIKLSVSNNSSQKLIVHFSSIAVFINHQLKDGETFEETNILPNFYTTPIGYIQCKVISEKLLTNAAESRGIPSIIIRPPDIFSNPITGIGHSNDFVSLLLKVSKEIGYYPNIHKPIFTTPITTIAKTTIDLIFNENSWNQNKSKPISIYSLNGNSIEMKSIYEFLENKFNCKEIDYQEWIKLVSKSNGKSSKRYSAFHIHDNQNLLISTFKINSLFKMSNSTKELLISIGSYNHQDWEINESIILNNINSNSN</sequence>
<feature type="chain" id="PRO_0000371390" description="Probable polyketide synthase 30">
    <location>
        <begin position="1"/>
        <end position="3075"/>
    </location>
</feature>
<feature type="domain" description="Ketosynthase family 3 (KS3)" evidence="3">
    <location>
        <begin position="26"/>
        <end position="458"/>
    </location>
</feature>
<feature type="domain" description="PKS/mFAS DH" evidence="4">
    <location>
        <begin position="963"/>
        <end position="1269"/>
    </location>
</feature>
<feature type="domain" description="Carrier" evidence="2">
    <location>
        <begin position="2533"/>
        <end position="2610"/>
    </location>
</feature>
<feature type="region of interest" description="Acyl/malonyl transferase">
    <location>
        <begin position="663"/>
        <end position="696"/>
    </location>
</feature>
<feature type="region of interest" description="N-terminal hotdog fold" evidence="4">
    <location>
        <begin position="963"/>
        <end position="1085"/>
    </location>
</feature>
<feature type="region of interest" description="C-terminal hotdog fold" evidence="4">
    <location>
        <begin position="1102"/>
        <end position="1269"/>
    </location>
</feature>
<feature type="active site" description="For beta-ketoacyl synthase activity" evidence="3">
    <location>
        <position position="198"/>
    </location>
</feature>
<feature type="active site" description="For beta-ketoacyl synthase activity" evidence="3">
    <location>
        <position position="337"/>
    </location>
</feature>
<feature type="active site" description="For beta-ketoacyl synthase activity" evidence="3">
    <location>
        <position position="381"/>
    </location>
</feature>
<feature type="active site" description="For acyl/malonyl transferase activity" evidence="5">
    <location>
        <position position="673"/>
    </location>
</feature>
<feature type="active site" description="Proton acceptor; for dehydratase activity" evidence="4">
    <location>
        <position position="997"/>
    </location>
</feature>
<feature type="active site" description="Proton donor; for dehydratase activity" evidence="4">
    <location>
        <position position="1174"/>
    </location>
</feature>
<feature type="modified residue" description="O-(pantetheine 4'-phosphoryl)serine" evidence="2">
    <location>
        <position position="2570"/>
    </location>
</feature>
<protein>
    <recommendedName>
        <fullName>Probable polyketide synthase 30</fullName>
        <shortName>dipks30</shortName>
        <ecNumber>2.3.1.-</ecNumber>
    </recommendedName>
</protein>
<name>PKS30_DICDI</name>
<evidence type="ECO:0000250" key="1"/>
<evidence type="ECO:0000255" key="2">
    <source>
        <dbReference type="PROSITE-ProRule" id="PRU00258"/>
    </source>
</evidence>
<evidence type="ECO:0000255" key="3">
    <source>
        <dbReference type="PROSITE-ProRule" id="PRU01348"/>
    </source>
</evidence>
<evidence type="ECO:0000255" key="4">
    <source>
        <dbReference type="PROSITE-ProRule" id="PRU01363"/>
    </source>
</evidence>
<evidence type="ECO:0000255" key="5">
    <source>
        <dbReference type="PROSITE-ProRule" id="PRU10022"/>
    </source>
</evidence>
<evidence type="ECO:0000269" key="6">
    <source>
    </source>
</evidence>
<proteinExistence type="inferred from homology"/>